<accession>Q9T0G2</accession>
<protein>
    <recommendedName>
        <fullName evidence="3">Cytochrome c-2</fullName>
    </recommendedName>
    <alternativeName>
        <fullName>Cytochrome c At4g10040</fullName>
    </alternativeName>
</protein>
<feature type="initiator methionine" description="Removed" evidence="4">
    <location>
        <position position="1"/>
    </location>
</feature>
<feature type="chain" id="PRO_0000108286" description="Cytochrome c-2">
    <location>
        <begin position="2"/>
        <end position="112"/>
    </location>
</feature>
<feature type="binding site" description="covalent" evidence="2">
    <location>
        <position position="23"/>
    </location>
    <ligand>
        <name>heme c</name>
        <dbReference type="ChEBI" id="CHEBI:61717"/>
    </ligand>
</feature>
<feature type="binding site" description="covalent" evidence="2">
    <location>
        <position position="26"/>
    </location>
    <ligand>
        <name>heme c</name>
        <dbReference type="ChEBI" id="CHEBI:61717"/>
    </ligand>
</feature>
<feature type="binding site" description="axial binding residue" evidence="2">
    <location>
        <position position="27"/>
    </location>
    <ligand>
        <name>heme c</name>
        <dbReference type="ChEBI" id="CHEBI:61717"/>
    </ligand>
    <ligandPart>
        <name>Fe</name>
        <dbReference type="ChEBI" id="CHEBI:18248"/>
    </ligandPart>
</feature>
<feature type="binding site" description="axial binding residue" evidence="2">
    <location>
        <position position="89"/>
    </location>
    <ligand>
        <name>heme c</name>
        <dbReference type="ChEBI" id="CHEBI:61717"/>
    </ligand>
    <ligandPart>
        <name>Fe</name>
        <dbReference type="ChEBI" id="CHEBI:18248"/>
    </ligandPart>
</feature>
<feature type="modified residue" description="N-acetylalanine" evidence="4">
    <location>
        <position position="2"/>
    </location>
</feature>
<comment type="function">
    <text evidence="1">Electron carrier protein. The oxidized form of the cytochrome c heme group can accept an electron from the heme group of the cytochrome c1 subunit of cytochrome reductase. Cytochrome c then transfers this electron to the cytochrome oxidase complex, the final protein carrier in the mitochondrial electron-transport chain (By similarity).</text>
</comment>
<comment type="subcellular location">
    <subcellularLocation>
        <location evidence="1">Mitochondrion intermembrane space</location>
    </subcellularLocation>
    <text evidence="1">Loosely associated with the inner membrane.</text>
</comment>
<comment type="PTM">
    <text evidence="1">Binds 1 heme c group covalently per subunit.</text>
</comment>
<comment type="similarity">
    <text evidence="3">Belongs to the cytochrome c family.</text>
</comment>
<comment type="online information" name="Protein Spotlight">
    <link uri="https://www.proteinspotlight.org/back_issues/076"/>
    <text>Life shuttle - Issue 76 of November 2006</text>
</comment>
<proteinExistence type="evidence at protein level"/>
<dbReference type="EMBL" id="AL049481">
    <property type="protein sequence ID" value="CAB39628.1"/>
    <property type="molecule type" value="Genomic_DNA"/>
</dbReference>
<dbReference type="EMBL" id="AL161516">
    <property type="protein sequence ID" value="CAB78127.1"/>
    <property type="molecule type" value="Genomic_DNA"/>
</dbReference>
<dbReference type="EMBL" id="CP002687">
    <property type="protein sequence ID" value="AEE82832.1"/>
    <property type="molecule type" value="Genomic_DNA"/>
</dbReference>
<dbReference type="EMBL" id="AY045944">
    <property type="protein sequence ID" value="AAK76618.1"/>
    <property type="molecule type" value="mRNA"/>
</dbReference>
<dbReference type="EMBL" id="AY079373">
    <property type="protein sequence ID" value="AAL85104.1"/>
    <property type="molecule type" value="mRNA"/>
</dbReference>
<dbReference type="EMBL" id="AY087056">
    <property type="protein sequence ID" value="AAM64617.1"/>
    <property type="molecule type" value="mRNA"/>
</dbReference>
<dbReference type="PIR" id="T04008">
    <property type="entry name" value="T04008"/>
</dbReference>
<dbReference type="RefSeq" id="NP_192742.1">
    <property type="nucleotide sequence ID" value="NM_117072.4"/>
</dbReference>
<dbReference type="BMRB" id="Q9T0G2"/>
<dbReference type="SMR" id="Q9T0G2"/>
<dbReference type="BioGRID" id="11894">
    <property type="interactions" value="3"/>
</dbReference>
<dbReference type="FunCoup" id="Q9T0G2">
    <property type="interactions" value="1679"/>
</dbReference>
<dbReference type="IntAct" id="Q9T0G2">
    <property type="interactions" value="3"/>
</dbReference>
<dbReference type="STRING" id="3702.Q9T0G2"/>
<dbReference type="iPTMnet" id="Q9T0G2"/>
<dbReference type="PaxDb" id="3702-AT4G10040.1"/>
<dbReference type="ProteomicsDB" id="220462"/>
<dbReference type="EnsemblPlants" id="AT4G10040.1">
    <property type="protein sequence ID" value="AT4G10040.1"/>
    <property type="gene ID" value="AT4G10040"/>
</dbReference>
<dbReference type="GeneID" id="826595"/>
<dbReference type="Gramene" id="AT4G10040.1">
    <property type="protein sequence ID" value="AT4G10040.1"/>
    <property type="gene ID" value="AT4G10040"/>
</dbReference>
<dbReference type="KEGG" id="ath:AT4G10040"/>
<dbReference type="Araport" id="AT4G10040"/>
<dbReference type="TAIR" id="AT4G10040">
    <property type="gene designation" value="CYTC-2"/>
</dbReference>
<dbReference type="eggNOG" id="KOG3453">
    <property type="taxonomic scope" value="Eukaryota"/>
</dbReference>
<dbReference type="HOGENOM" id="CLU_060944_3_0_1"/>
<dbReference type="InParanoid" id="Q9T0G2"/>
<dbReference type="OMA" id="KARCAQC"/>
<dbReference type="OrthoDB" id="449280at2759"/>
<dbReference type="PhylomeDB" id="Q9T0G2"/>
<dbReference type="CD-CODE" id="4299E36E">
    <property type="entry name" value="Nucleolus"/>
</dbReference>
<dbReference type="PRO" id="PR:Q9T0G2"/>
<dbReference type="Proteomes" id="UP000006548">
    <property type="component" value="Chromosome 4"/>
</dbReference>
<dbReference type="ExpressionAtlas" id="Q9T0G2">
    <property type="expression patterns" value="baseline and differential"/>
</dbReference>
<dbReference type="GO" id="GO:0005829">
    <property type="term" value="C:cytosol"/>
    <property type="evidence" value="ECO:0007005"/>
    <property type="project" value="TAIR"/>
</dbReference>
<dbReference type="GO" id="GO:0005758">
    <property type="term" value="C:mitochondrial intermembrane space"/>
    <property type="evidence" value="ECO:0007669"/>
    <property type="project" value="UniProtKB-SubCell"/>
</dbReference>
<dbReference type="GO" id="GO:0005507">
    <property type="term" value="F:copper ion binding"/>
    <property type="evidence" value="ECO:0007005"/>
    <property type="project" value="TAIR"/>
</dbReference>
<dbReference type="GO" id="GO:0009055">
    <property type="term" value="F:electron transfer activity"/>
    <property type="evidence" value="ECO:0007669"/>
    <property type="project" value="InterPro"/>
</dbReference>
<dbReference type="GO" id="GO:0020037">
    <property type="term" value="F:heme binding"/>
    <property type="evidence" value="ECO:0007669"/>
    <property type="project" value="InterPro"/>
</dbReference>
<dbReference type="GO" id="GO:0010336">
    <property type="term" value="P:gibberellic acid homeostasis"/>
    <property type="evidence" value="ECO:0000315"/>
    <property type="project" value="TAIR"/>
</dbReference>
<dbReference type="FunFam" id="1.10.760.10:FF:000001">
    <property type="entry name" value="Cytochrome c iso-1"/>
    <property type="match status" value="1"/>
</dbReference>
<dbReference type="Gene3D" id="1.10.760.10">
    <property type="entry name" value="Cytochrome c-like domain"/>
    <property type="match status" value="1"/>
</dbReference>
<dbReference type="InterPro" id="IPR009056">
    <property type="entry name" value="Cyt_c-like_dom"/>
</dbReference>
<dbReference type="InterPro" id="IPR036909">
    <property type="entry name" value="Cyt_c-like_dom_sf"/>
</dbReference>
<dbReference type="InterPro" id="IPR002327">
    <property type="entry name" value="Cyt_c_1A/1B"/>
</dbReference>
<dbReference type="PANTHER" id="PTHR11961">
    <property type="entry name" value="CYTOCHROME C"/>
    <property type="match status" value="1"/>
</dbReference>
<dbReference type="Pfam" id="PF00034">
    <property type="entry name" value="Cytochrom_C"/>
    <property type="match status" value="1"/>
</dbReference>
<dbReference type="PRINTS" id="PR00604">
    <property type="entry name" value="CYTCHRMECIAB"/>
</dbReference>
<dbReference type="SUPFAM" id="SSF46626">
    <property type="entry name" value="Cytochrome c"/>
    <property type="match status" value="1"/>
</dbReference>
<dbReference type="PROSITE" id="PS51007">
    <property type="entry name" value="CYTC"/>
    <property type="match status" value="1"/>
</dbReference>
<name>CYC2_ARATH</name>
<sequence>MASFDEAPPGNPKAGEKIFRTKCAQCHTVEKGAGHKQGPNLNGLFGRQSGTTPGYSYSAANKSMAVNWEEKTLYDYLLNPKKYIPGTKMVFPGLKKPQDRADLIAYLKEGTA</sequence>
<reference key="1">
    <citation type="journal article" date="1999" name="Nature">
        <title>Sequence and analysis of chromosome 4 of the plant Arabidopsis thaliana.</title>
        <authorList>
            <person name="Mayer K.F.X."/>
            <person name="Schueller C."/>
            <person name="Wambutt R."/>
            <person name="Murphy G."/>
            <person name="Volckaert G."/>
            <person name="Pohl T."/>
            <person name="Duesterhoeft A."/>
            <person name="Stiekema W."/>
            <person name="Entian K.-D."/>
            <person name="Terryn N."/>
            <person name="Harris B."/>
            <person name="Ansorge W."/>
            <person name="Brandt P."/>
            <person name="Grivell L.A."/>
            <person name="Rieger M."/>
            <person name="Weichselgartner M."/>
            <person name="de Simone V."/>
            <person name="Obermaier B."/>
            <person name="Mache R."/>
            <person name="Mueller M."/>
            <person name="Kreis M."/>
            <person name="Delseny M."/>
            <person name="Puigdomenech P."/>
            <person name="Watson M."/>
            <person name="Schmidtheini T."/>
            <person name="Reichert B."/>
            <person name="Portetelle D."/>
            <person name="Perez-Alonso M."/>
            <person name="Boutry M."/>
            <person name="Bancroft I."/>
            <person name="Vos P."/>
            <person name="Hoheisel J."/>
            <person name="Zimmermann W."/>
            <person name="Wedler H."/>
            <person name="Ridley P."/>
            <person name="Langham S.-A."/>
            <person name="McCullagh B."/>
            <person name="Bilham L."/>
            <person name="Robben J."/>
            <person name="van der Schueren J."/>
            <person name="Grymonprez B."/>
            <person name="Chuang Y.-J."/>
            <person name="Vandenbussche F."/>
            <person name="Braeken M."/>
            <person name="Weltjens I."/>
            <person name="Voet M."/>
            <person name="Bastiaens I."/>
            <person name="Aert R."/>
            <person name="Defoor E."/>
            <person name="Weitzenegger T."/>
            <person name="Bothe G."/>
            <person name="Ramsperger U."/>
            <person name="Hilbert H."/>
            <person name="Braun M."/>
            <person name="Holzer E."/>
            <person name="Brandt A."/>
            <person name="Peters S."/>
            <person name="van Staveren M."/>
            <person name="Dirkse W."/>
            <person name="Mooijman P."/>
            <person name="Klein Lankhorst R."/>
            <person name="Rose M."/>
            <person name="Hauf J."/>
            <person name="Koetter P."/>
            <person name="Berneiser S."/>
            <person name="Hempel S."/>
            <person name="Feldpausch M."/>
            <person name="Lamberth S."/>
            <person name="Van den Daele H."/>
            <person name="De Keyser A."/>
            <person name="Buysshaert C."/>
            <person name="Gielen J."/>
            <person name="Villarroel R."/>
            <person name="De Clercq R."/>
            <person name="van Montagu M."/>
            <person name="Rogers J."/>
            <person name="Cronin A."/>
            <person name="Quail M.A."/>
            <person name="Bray-Allen S."/>
            <person name="Clark L."/>
            <person name="Doggett J."/>
            <person name="Hall S."/>
            <person name="Kay M."/>
            <person name="Lennard N."/>
            <person name="McLay K."/>
            <person name="Mayes R."/>
            <person name="Pettett A."/>
            <person name="Rajandream M.A."/>
            <person name="Lyne M."/>
            <person name="Benes V."/>
            <person name="Rechmann S."/>
            <person name="Borkova D."/>
            <person name="Bloecker H."/>
            <person name="Scharfe M."/>
            <person name="Grimm M."/>
            <person name="Loehnert T.-H."/>
            <person name="Dose S."/>
            <person name="de Haan M."/>
            <person name="Maarse A.C."/>
            <person name="Schaefer M."/>
            <person name="Mueller-Auer S."/>
            <person name="Gabel C."/>
            <person name="Fuchs M."/>
            <person name="Fartmann B."/>
            <person name="Granderath K."/>
            <person name="Dauner D."/>
            <person name="Herzl A."/>
            <person name="Neumann S."/>
            <person name="Argiriou A."/>
            <person name="Vitale D."/>
            <person name="Liguori R."/>
            <person name="Piravandi E."/>
            <person name="Massenet O."/>
            <person name="Quigley F."/>
            <person name="Clabauld G."/>
            <person name="Muendlein A."/>
            <person name="Felber R."/>
            <person name="Schnabl S."/>
            <person name="Hiller R."/>
            <person name="Schmidt W."/>
            <person name="Lecharny A."/>
            <person name="Aubourg S."/>
            <person name="Chefdor F."/>
            <person name="Cooke R."/>
            <person name="Berger C."/>
            <person name="Monfort A."/>
            <person name="Casacuberta E."/>
            <person name="Gibbons T."/>
            <person name="Weber N."/>
            <person name="Vandenbol M."/>
            <person name="Bargues M."/>
            <person name="Terol J."/>
            <person name="Torres A."/>
            <person name="Perez-Perez A."/>
            <person name="Purnelle B."/>
            <person name="Bent E."/>
            <person name="Johnson S."/>
            <person name="Tacon D."/>
            <person name="Jesse T."/>
            <person name="Heijnen L."/>
            <person name="Schwarz S."/>
            <person name="Scholler P."/>
            <person name="Heber S."/>
            <person name="Francs P."/>
            <person name="Bielke C."/>
            <person name="Frishman D."/>
            <person name="Haase D."/>
            <person name="Lemcke K."/>
            <person name="Mewes H.-W."/>
            <person name="Stocker S."/>
            <person name="Zaccaria P."/>
            <person name="Bevan M."/>
            <person name="Wilson R.K."/>
            <person name="de la Bastide M."/>
            <person name="Habermann K."/>
            <person name="Parnell L."/>
            <person name="Dedhia N."/>
            <person name="Gnoj L."/>
            <person name="Schutz K."/>
            <person name="Huang E."/>
            <person name="Spiegel L."/>
            <person name="Sekhon M."/>
            <person name="Murray J."/>
            <person name="Sheet P."/>
            <person name="Cordes M."/>
            <person name="Abu-Threideh J."/>
            <person name="Stoneking T."/>
            <person name="Kalicki J."/>
            <person name="Graves T."/>
            <person name="Harmon G."/>
            <person name="Edwards J."/>
            <person name="Latreille P."/>
            <person name="Courtney L."/>
            <person name="Cloud J."/>
            <person name="Abbott A."/>
            <person name="Scott K."/>
            <person name="Johnson D."/>
            <person name="Minx P."/>
            <person name="Bentley D."/>
            <person name="Fulton B."/>
            <person name="Miller N."/>
            <person name="Greco T."/>
            <person name="Kemp K."/>
            <person name="Kramer J."/>
            <person name="Fulton L."/>
            <person name="Mardis E."/>
            <person name="Dante M."/>
            <person name="Pepin K."/>
            <person name="Hillier L.W."/>
            <person name="Nelson J."/>
            <person name="Spieth J."/>
            <person name="Ryan E."/>
            <person name="Andrews S."/>
            <person name="Geisel C."/>
            <person name="Layman D."/>
            <person name="Du H."/>
            <person name="Ali J."/>
            <person name="Berghoff A."/>
            <person name="Jones K."/>
            <person name="Drone K."/>
            <person name="Cotton M."/>
            <person name="Joshu C."/>
            <person name="Antonoiu B."/>
            <person name="Zidanic M."/>
            <person name="Strong C."/>
            <person name="Sun H."/>
            <person name="Lamar B."/>
            <person name="Yordan C."/>
            <person name="Ma P."/>
            <person name="Zhong J."/>
            <person name="Preston R."/>
            <person name="Vil D."/>
            <person name="Shekher M."/>
            <person name="Matero A."/>
            <person name="Shah R."/>
            <person name="Swaby I.K."/>
            <person name="O'Shaughnessy A."/>
            <person name="Rodriguez M."/>
            <person name="Hoffman J."/>
            <person name="Till S."/>
            <person name="Granat S."/>
            <person name="Shohdy N."/>
            <person name="Hasegawa A."/>
            <person name="Hameed A."/>
            <person name="Lodhi M."/>
            <person name="Johnson A."/>
            <person name="Chen E."/>
            <person name="Marra M.A."/>
            <person name="Martienssen R."/>
            <person name="McCombie W.R."/>
        </authorList>
    </citation>
    <scope>NUCLEOTIDE SEQUENCE [LARGE SCALE GENOMIC DNA]</scope>
    <source>
        <strain>cv. Columbia</strain>
    </source>
</reference>
<reference key="2">
    <citation type="journal article" date="2017" name="Plant J.">
        <title>Araport11: a complete reannotation of the Arabidopsis thaliana reference genome.</title>
        <authorList>
            <person name="Cheng C.Y."/>
            <person name="Krishnakumar V."/>
            <person name="Chan A.P."/>
            <person name="Thibaud-Nissen F."/>
            <person name="Schobel S."/>
            <person name="Town C.D."/>
        </authorList>
    </citation>
    <scope>GENOME REANNOTATION</scope>
    <source>
        <strain>cv. Columbia</strain>
    </source>
</reference>
<reference key="3">
    <citation type="journal article" date="2003" name="Science">
        <title>Empirical analysis of transcriptional activity in the Arabidopsis genome.</title>
        <authorList>
            <person name="Yamada K."/>
            <person name="Lim J."/>
            <person name="Dale J.M."/>
            <person name="Chen H."/>
            <person name="Shinn P."/>
            <person name="Palm C.J."/>
            <person name="Southwick A.M."/>
            <person name="Wu H.C."/>
            <person name="Kim C.J."/>
            <person name="Nguyen M."/>
            <person name="Pham P.K."/>
            <person name="Cheuk R.F."/>
            <person name="Karlin-Newmann G."/>
            <person name="Liu S.X."/>
            <person name="Lam B."/>
            <person name="Sakano H."/>
            <person name="Wu T."/>
            <person name="Yu G."/>
            <person name="Miranda M."/>
            <person name="Quach H.L."/>
            <person name="Tripp M."/>
            <person name="Chang C.H."/>
            <person name="Lee J.M."/>
            <person name="Toriumi M.J."/>
            <person name="Chan M.M."/>
            <person name="Tang C.C."/>
            <person name="Onodera C.S."/>
            <person name="Deng J.M."/>
            <person name="Akiyama K."/>
            <person name="Ansari Y."/>
            <person name="Arakawa T."/>
            <person name="Banh J."/>
            <person name="Banno F."/>
            <person name="Bowser L."/>
            <person name="Brooks S.Y."/>
            <person name="Carninci P."/>
            <person name="Chao Q."/>
            <person name="Choy N."/>
            <person name="Enju A."/>
            <person name="Goldsmith A.D."/>
            <person name="Gurjal M."/>
            <person name="Hansen N.F."/>
            <person name="Hayashizaki Y."/>
            <person name="Johnson-Hopson C."/>
            <person name="Hsuan V.W."/>
            <person name="Iida K."/>
            <person name="Karnes M."/>
            <person name="Khan S."/>
            <person name="Koesema E."/>
            <person name="Ishida J."/>
            <person name="Jiang P.X."/>
            <person name="Jones T."/>
            <person name="Kawai J."/>
            <person name="Kamiya A."/>
            <person name="Meyers C."/>
            <person name="Nakajima M."/>
            <person name="Narusaka M."/>
            <person name="Seki M."/>
            <person name="Sakurai T."/>
            <person name="Satou M."/>
            <person name="Tamse R."/>
            <person name="Vaysberg M."/>
            <person name="Wallender E.K."/>
            <person name="Wong C."/>
            <person name="Yamamura Y."/>
            <person name="Yuan S."/>
            <person name="Shinozaki K."/>
            <person name="Davis R.W."/>
            <person name="Theologis A."/>
            <person name="Ecker J.R."/>
        </authorList>
    </citation>
    <scope>NUCLEOTIDE SEQUENCE [LARGE SCALE MRNA]</scope>
    <source>
        <strain>cv. Columbia</strain>
    </source>
</reference>
<reference key="4">
    <citation type="submission" date="2002-03" db="EMBL/GenBank/DDBJ databases">
        <title>Full-length cDNA from Arabidopsis thaliana.</title>
        <authorList>
            <person name="Brover V.V."/>
            <person name="Troukhan M.E."/>
            <person name="Alexandrov N.A."/>
            <person name="Lu Y.-P."/>
            <person name="Flavell R.B."/>
            <person name="Feldmann K.A."/>
        </authorList>
    </citation>
    <scope>NUCLEOTIDE SEQUENCE [LARGE SCALE MRNA]</scope>
</reference>
<reference key="5">
    <citation type="journal article" date="2012" name="Mol. Cell. Proteomics">
        <title>Comparative large-scale characterisation of plant vs. mammal proteins reveals similar and idiosyncratic N-alpha acetylation features.</title>
        <authorList>
            <person name="Bienvenut W.V."/>
            <person name="Sumpton D."/>
            <person name="Martinez A."/>
            <person name="Lilla S."/>
            <person name="Espagne C."/>
            <person name="Meinnel T."/>
            <person name="Giglione C."/>
        </authorList>
    </citation>
    <scope>ACETYLATION [LARGE SCALE ANALYSIS] AT ALA-2</scope>
    <scope>CLEAVAGE OF INITIATOR METHIONINE [LARGE SCALE ANALYSIS]</scope>
    <scope>IDENTIFICATION BY MASS SPECTROMETRY [LARGE SCALE ANALYSIS]</scope>
</reference>
<keyword id="KW-0007">Acetylation</keyword>
<keyword id="KW-0249">Electron transport</keyword>
<keyword id="KW-0349">Heme</keyword>
<keyword id="KW-0408">Iron</keyword>
<keyword id="KW-0479">Metal-binding</keyword>
<keyword id="KW-0496">Mitochondrion</keyword>
<keyword id="KW-1185">Reference proteome</keyword>
<keyword id="KW-0679">Respiratory chain</keyword>
<keyword id="KW-0813">Transport</keyword>
<organism>
    <name type="scientific">Arabidopsis thaliana</name>
    <name type="common">Mouse-ear cress</name>
    <dbReference type="NCBI Taxonomy" id="3702"/>
    <lineage>
        <taxon>Eukaryota</taxon>
        <taxon>Viridiplantae</taxon>
        <taxon>Streptophyta</taxon>
        <taxon>Embryophyta</taxon>
        <taxon>Tracheophyta</taxon>
        <taxon>Spermatophyta</taxon>
        <taxon>Magnoliopsida</taxon>
        <taxon>eudicotyledons</taxon>
        <taxon>Gunneridae</taxon>
        <taxon>Pentapetalae</taxon>
        <taxon>rosids</taxon>
        <taxon>malvids</taxon>
        <taxon>Brassicales</taxon>
        <taxon>Brassicaceae</taxon>
        <taxon>Camelineae</taxon>
        <taxon>Arabidopsis</taxon>
    </lineage>
</organism>
<evidence type="ECO:0000250" key="1"/>
<evidence type="ECO:0000255" key="2">
    <source>
        <dbReference type="PROSITE-ProRule" id="PRU00433"/>
    </source>
</evidence>
<evidence type="ECO:0000305" key="3"/>
<evidence type="ECO:0007744" key="4">
    <source>
    </source>
</evidence>
<gene>
    <name evidence="3" type="primary">CYTC-2</name>
    <name type="ordered locus">At4g10040</name>
    <name type="ORF">T5L19.170</name>
</gene>